<sequence>MSPTTHWGDKFLNLRVPPAGVFVVAFFARVALIFYGVFQDRTLLVRYTDIDYQVFTDAARFVTEGHSPYLRATYRYTPLLAWLLTPNIYLNELFGKFLFISFDLFTAFLLYRLLLLKGLGRRQACGYCVFWLLNPLPMAVSSRGNADSIVASLVLMTLYLIEKRLVACAAVSYGFAVHLKMYPVTYILPIALHLLPERDSDEGLRQSRYSFQVRLYEFLKRLCHRAVLLFVAVAGLTFFALSFGFYYRYGWEFLEHAYLYHLTRRDIRHNFSPYFYMLYLTAESKWSFSLGIAAFLPQFILLSAVSFAYYRDLVFCCFLHTSIFVTFNKVCTSQYFLWYLCLLPLVMPLVRIPWRRAVVLLMLWFIGQALWLAPAYVLEFQGKNTFLFIWLAGLFFLLINCSILIQIISHYKEEPLTDRTKYD</sequence>
<name>PIGM_BOVIN</name>
<protein>
    <recommendedName>
        <fullName evidence="2">GPI alpha-1,4-mannosyltransferase I, catalytic subunit</fullName>
        <ecNumber evidence="2">2.4.1.-</ecNumber>
    </recommendedName>
    <alternativeName>
        <fullName>GPI mannosyltransferase I</fullName>
        <shortName>GPI-MT-I</shortName>
    </alternativeName>
    <alternativeName>
        <fullName>Phosphatidylinositol-glycan biosynthesis class M protein</fullName>
        <shortName>PIG-M</shortName>
    </alternativeName>
</protein>
<proteinExistence type="evidence at transcript level"/>
<dbReference type="EC" id="2.4.1.-" evidence="2"/>
<dbReference type="EMBL" id="BT020759">
    <property type="protein sequence ID" value="AAX08776.1"/>
    <property type="molecule type" value="mRNA"/>
</dbReference>
<dbReference type="RefSeq" id="NP_001015563.1">
    <property type="nucleotide sequence ID" value="NM_001015563.1"/>
</dbReference>
<dbReference type="SMR" id="Q5EA10"/>
<dbReference type="FunCoup" id="Q5EA10">
    <property type="interactions" value="2633"/>
</dbReference>
<dbReference type="STRING" id="9913.ENSBTAP00000003140"/>
<dbReference type="CAZy" id="GT50">
    <property type="family name" value="Glycosyltransferase Family 50"/>
</dbReference>
<dbReference type="PaxDb" id="9913-ENSBTAP00000003140"/>
<dbReference type="GeneID" id="509680"/>
<dbReference type="KEGG" id="bta:509680"/>
<dbReference type="CTD" id="93183"/>
<dbReference type="eggNOG" id="KOG3893">
    <property type="taxonomic scope" value="Eukaryota"/>
</dbReference>
<dbReference type="InParanoid" id="Q5EA10"/>
<dbReference type="OrthoDB" id="1741594at2759"/>
<dbReference type="UniPathway" id="UPA00196"/>
<dbReference type="Proteomes" id="UP000009136">
    <property type="component" value="Unplaced"/>
</dbReference>
<dbReference type="GO" id="GO:0005789">
    <property type="term" value="C:endoplasmic reticulum membrane"/>
    <property type="evidence" value="ECO:0000250"/>
    <property type="project" value="UniProtKB"/>
</dbReference>
<dbReference type="GO" id="GO:1990529">
    <property type="term" value="C:glycosylphosphatidylinositol-mannosyltransferase I complex"/>
    <property type="evidence" value="ECO:0000250"/>
    <property type="project" value="UniProtKB"/>
</dbReference>
<dbReference type="GO" id="GO:0180041">
    <property type="term" value="F:glycolipid 1,4-alpha-mannosyltransferase activity"/>
    <property type="evidence" value="ECO:0000250"/>
    <property type="project" value="UniProtKB"/>
</dbReference>
<dbReference type="GO" id="GO:0000030">
    <property type="term" value="F:mannosyltransferase activity"/>
    <property type="evidence" value="ECO:0000318"/>
    <property type="project" value="GO_Central"/>
</dbReference>
<dbReference type="GO" id="GO:0006506">
    <property type="term" value="P:GPI anchor biosynthetic process"/>
    <property type="evidence" value="ECO:0000250"/>
    <property type="project" value="UniProtKB"/>
</dbReference>
<dbReference type="InterPro" id="IPR007704">
    <property type="entry name" value="PIG-M"/>
</dbReference>
<dbReference type="PANTHER" id="PTHR12886:SF0">
    <property type="entry name" value="GPI MANNOSYLTRANSFERASE 1"/>
    <property type="match status" value="1"/>
</dbReference>
<dbReference type="PANTHER" id="PTHR12886">
    <property type="entry name" value="PIG-M MANNOSYLTRANSFERASE"/>
    <property type="match status" value="1"/>
</dbReference>
<dbReference type="Pfam" id="PF05007">
    <property type="entry name" value="Mannosyl_trans"/>
    <property type="match status" value="1"/>
</dbReference>
<reference key="1">
    <citation type="journal article" date="2005" name="BMC Genomics">
        <title>Characterization of 954 bovine full-CDS cDNA sequences.</title>
        <authorList>
            <person name="Harhay G.P."/>
            <person name="Sonstegard T.S."/>
            <person name="Keele J.W."/>
            <person name="Heaton M.P."/>
            <person name="Clawson M.L."/>
            <person name="Snelling W.M."/>
            <person name="Wiedmann R.T."/>
            <person name="Van Tassell C.P."/>
            <person name="Smith T.P.L."/>
        </authorList>
    </citation>
    <scope>NUCLEOTIDE SEQUENCE [LARGE SCALE MRNA]</scope>
</reference>
<feature type="chain" id="PRO_0000246212" description="GPI alpha-1,4-mannosyltransferase I, catalytic subunit">
    <location>
        <begin position="1"/>
        <end position="423"/>
    </location>
</feature>
<feature type="topological domain" description="Cytoplasmic" evidence="3">
    <location>
        <begin position="1"/>
        <end position="17"/>
    </location>
</feature>
<feature type="transmembrane region" description="Helical" evidence="3">
    <location>
        <begin position="18"/>
        <end position="38"/>
    </location>
</feature>
<feature type="topological domain" description="Lumenal" evidence="3">
    <location>
        <begin position="39"/>
        <end position="89"/>
    </location>
</feature>
<feature type="transmembrane region" description="Helical" evidence="3">
    <location>
        <begin position="90"/>
        <end position="110"/>
    </location>
</feature>
<feature type="topological domain" description="Cytoplasmic" evidence="3">
    <location>
        <begin position="111"/>
        <end position="225"/>
    </location>
</feature>
<feature type="transmembrane region" description="Helical" evidence="3">
    <location>
        <begin position="226"/>
        <end position="246"/>
    </location>
</feature>
<feature type="topological domain" description="Lumenal" evidence="3">
    <location>
        <begin position="247"/>
        <end position="287"/>
    </location>
</feature>
<feature type="transmembrane region" description="Helical" evidence="3">
    <location>
        <begin position="288"/>
        <end position="308"/>
    </location>
</feature>
<feature type="topological domain" description="Cytoplasmic" evidence="3">
    <location>
        <begin position="309"/>
        <end position="329"/>
    </location>
</feature>
<feature type="transmembrane region" description="Helical" evidence="3">
    <location>
        <begin position="330"/>
        <end position="350"/>
    </location>
</feature>
<feature type="topological domain" description="Lumenal" evidence="3">
    <location>
        <begin position="351"/>
        <end position="357"/>
    </location>
</feature>
<feature type="transmembrane region" description="Helical" evidence="3">
    <location>
        <begin position="358"/>
        <end position="378"/>
    </location>
</feature>
<feature type="topological domain" description="Cytoplasmic" evidence="3">
    <location>
        <begin position="379"/>
        <end position="384"/>
    </location>
</feature>
<feature type="transmembrane region" description="Helical" evidence="3">
    <location>
        <begin position="385"/>
        <end position="405"/>
    </location>
</feature>
<feature type="topological domain" description="Lumenal" evidence="3">
    <location>
        <begin position="406"/>
        <end position="423"/>
    </location>
</feature>
<accession>Q5EA10</accession>
<comment type="function">
    <text evidence="2">Catalytic subunit of the glycosylphosphatidylinositol-mannosyltransferase I complex which catalyzes the transfer of the first mannose, via an alpha-1,4 bond from a dolichol-phosphate-mannose (Dol-P-Man) to the glucosaminyl acyl phosphatidylinositol (GlcN-(acyl)PI) intermediate to generate alpha-D-Man-(1-&gt;4)-alpha-D-GlcN-(1-&gt;6)-(1-radyl,2-acyl-sn-glycero-3-phospho)-2-acyl-inositol and participates in the sixth step of the glycosylphosphatidylinositol-anchor biosynthesis.</text>
</comment>
<comment type="pathway">
    <text evidence="2">Glycolipid biosynthesis; glycosylphosphatidylinositol-anchor biosynthesis.</text>
</comment>
<comment type="subunit">
    <text evidence="1">Part of the glycosylphosphatidylinositol-mannosyltransferase I complex that is composed of PIGM and PIGX. Interacts with PIGX; PIGX stabilizes PIGM.</text>
</comment>
<comment type="subcellular location">
    <subcellularLocation>
        <location evidence="2">Endoplasmic reticulum membrane</location>
        <topology evidence="2">Multi-pass membrane protein</topology>
    </subcellularLocation>
</comment>
<comment type="similarity">
    <text evidence="4">Belongs to the PIGM family.</text>
</comment>
<evidence type="ECO:0000250" key="1">
    <source>
        <dbReference type="UniProtKB" id="Q9EQY6"/>
    </source>
</evidence>
<evidence type="ECO:0000250" key="2">
    <source>
        <dbReference type="UniProtKB" id="Q9H3S5"/>
    </source>
</evidence>
<evidence type="ECO:0000255" key="3"/>
<evidence type="ECO:0000305" key="4"/>
<gene>
    <name evidence="2" type="primary">PIGM</name>
</gene>
<organism>
    <name type="scientific">Bos taurus</name>
    <name type="common">Bovine</name>
    <dbReference type="NCBI Taxonomy" id="9913"/>
    <lineage>
        <taxon>Eukaryota</taxon>
        <taxon>Metazoa</taxon>
        <taxon>Chordata</taxon>
        <taxon>Craniata</taxon>
        <taxon>Vertebrata</taxon>
        <taxon>Euteleostomi</taxon>
        <taxon>Mammalia</taxon>
        <taxon>Eutheria</taxon>
        <taxon>Laurasiatheria</taxon>
        <taxon>Artiodactyla</taxon>
        <taxon>Ruminantia</taxon>
        <taxon>Pecora</taxon>
        <taxon>Bovidae</taxon>
        <taxon>Bovinae</taxon>
        <taxon>Bos</taxon>
    </lineage>
</organism>
<keyword id="KW-0256">Endoplasmic reticulum</keyword>
<keyword id="KW-0328">Glycosyltransferase</keyword>
<keyword id="KW-0337">GPI-anchor biosynthesis</keyword>
<keyword id="KW-0472">Membrane</keyword>
<keyword id="KW-1185">Reference proteome</keyword>
<keyword id="KW-0808">Transferase</keyword>
<keyword id="KW-0812">Transmembrane</keyword>
<keyword id="KW-1133">Transmembrane helix</keyword>